<organism>
    <name type="scientific">Rhodococcus erythropolis (strain PR4 / NBRC 100887)</name>
    <dbReference type="NCBI Taxonomy" id="234621"/>
    <lineage>
        <taxon>Bacteria</taxon>
        <taxon>Bacillati</taxon>
        <taxon>Actinomycetota</taxon>
        <taxon>Actinomycetes</taxon>
        <taxon>Mycobacteriales</taxon>
        <taxon>Nocardiaceae</taxon>
        <taxon>Rhodococcus</taxon>
        <taxon>Rhodococcus erythropolis group</taxon>
    </lineage>
</organism>
<protein>
    <recommendedName>
        <fullName evidence="1">Glutamyl-tRNA(Gln) amidotransferase subunit A</fullName>
        <shortName evidence="1">Glu-ADT subunit A</shortName>
        <ecNumber evidence="1">6.3.5.7</ecNumber>
    </recommendedName>
</protein>
<gene>
    <name evidence="1" type="primary">gatA</name>
    <name type="ordered locus">RER_23840</name>
</gene>
<evidence type="ECO:0000255" key="1">
    <source>
        <dbReference type="HAMAP-Rule" id="MF_00120"/>
    </source>
</evidence>
<sequence length="492" mass="51136">MTDLTTLDAAELAGKIHSREVSSVEVTQAHLDRIAAVDTEYHAFLHVAGEQALEAAAAVDNSLAGGNEPASALAGVPIALKDIFTTTDMPTTCASKILEGWVAPYDATLTSKLRAAGIPILGKTNLDEFAMGSSTENSAFGPTRNPWDVTRIPGGSGGGSAAALASRQAPLAIGTDTGGSIRQPAAVTATVGTKPTYGTVSRFGLVACASSLDQGGPCGRTVLDTALLHEVIAGHDPRDSTSIDAPVRPVVAAAREGAAGDLRGVKVGVVKELHSDSYQPGVIASFDAAVEQLKALGAEVVEVSCPSFEHALASYYLVLPSEVSSNLARFDAMRYGLRVDEGNMSADQVMAATRAAGFGPEVKRRIMIGTYALSSGYYDAYYGSALKVRTLIARDFDKAYEKVDVLVSPTSPFTPWKLGEKVGDPLAMYLSDLCTLPTNLAGHCAMSVPSGLSADDNLPVGLQIMAPAMADERLYRVGAAYEAARGPIATAV</sequence>
<reference key="1">
    <citation type="submission" date="2005-03" db="EMBL/GenBank/DDBJ databases">
        <title>Comparison of the complete genome sequences of Rhodococcus erythropolis PR4 and Rhodococcus opacus B4.</title>
        <authorList>
            <person name="Takarada H."/>
            <person name="Sekine M."/>
            <person name="Hosoyama A."/>
            <person name="Yamada R."/>
            <person name="Fujisawa T."/>
            <person name="Omata S."/>
            <person name="Shimizu A."/>
            <person name="Tsukatani N."/>
            <person name="Tanikawa S."/>
            <person name="Fujita N."/>
            <person name="Harayama S."/>
        </authorList>
    </citation>
    <scope>NUCLEOTIDE SEQUENCE [LARGE SCALE GENOMIC DNA]</scope>
    <source>
        <strain>PR4 / NBRC 100887</strain>
    </source>
</reference>
<feature type="chain" id="PRO_1000203041" description="Glutamyl-tRNA(Gln) amidotransferase subunit A">
    <location>
        <begin position="1"/>
        <end position="492"/>
    </location>
</feature>
<feature type="active site" description="Charge relay system" evidence="1">
    <location>
        <position position="81"/>
    </location>
</feature>
<feature type="active site" description="Charge relay system" evidence="1">
    <location>
        <position position="156"/>
    </location>
</feature>
<feature type="active site" description="Acyl-ester intermediate" evidence="1">
    <location>
        <position position="180"/>
    </location>
</feature>
<accession>C0ZXK7</accession>
<name>GATA_RHOE4</name>
<keyword id="KW-0067">ATP-binding</keyword>
<keyword id="KW-0436">Ligase</keyword>
<keyword id="KW-0547">Nucleotide-binding</keyword>
<keyword id="KW-0648">Protein biosynthesis</keyword>
<dbReference type="EC" id="6.3.5.7" evidence="1"/>
<dbReference type="EMBL" id="AP008957">
    <property type="protein sequence ID" value="BAH33092.1"/>
    <property type="molecule type" value="Genomic_DNA"/>
</dbReference>
<dbReference type="RefSeq" id="WP_020907250.1">
    <property type="nucleotide sequence ID" value="NC_012490.1"/>
</dbReference>
<dbReference type="SMR" id="C0ZXK7"/>
<dbReference type="GeneID" id="93803376"/>
<dbReference type="KEGG" id="rer:RER_23840"/>
<dbReference type="eggNOG" id="COG0154">
    <property type="taxonomic scope" value="Bacteria"/>
</dbReference>
<dbReference type="HOGENOM" id="CLU_009600_0_3_11"/>
<dbReference type="Proteomes" id="UP000002204">
    <property type="component" value="Chromosome"/>
</dbReference>
<dbReference type="GO" id="GO:0030956">
    <property type="term" value="C:glutamyl-tRNA(Gln) amidotransferase complex"/>
    <property type="evidence" value="ECO:0007669"/>
    <property type="project" value="InterPro"/>
</dbReference>
<dbReference type="GO" id="GO:0005524">
    <property type="term" value="F:ATP binding"/>
    <property type="evidence" value="ECO:0007669"/>
    <property type="project" value="UniProtKB-KW"/>
</dbReference>
<dbReference type="GO" id="GO:0050567">
    <property type="term" value="F:glutaminyl-tRNA synthase (glutamine-hydrolyzing) activity"/>
    <property type="evidence" value="ECO:0007669"/>
    <property type="project" value="UniProtKB-UniRule"/>
</dbReference>
<dbReference type="GO" id="GO:0006412">
    <property type="term" value="P:translation"/>
    <property type="evidence" value="ECO:0007669"/>
    <property type="project" value="UniProtKB-UniRule"/>
</dbReference>
<dbReference type="Gene3D" id="3.90.1300.10">
    <property type="entry name" value="Amidase signature (AS) domain"/>
    <property type="match status" value="1"/>
</dbReference>
<dbReference type="HAMAP" id="MF_00120">
    <property type="entry name" value="GatA"/>
    <property type="match status" value="1"/>
</dbReference>
<dbReference type="InterPro" id="IPR000120">
    <property type="entry name" value="Amidase"/>
</dbReference>
<dbReference type="InterPro" id="IPR020556">
    <property type="entry name" value="Amidase_CS"/>
</dbReference>
<dbReference type="InterPro" id="IPR023631">
    <property type="entry name" value="Amidase_dom"/>
</dbReference>
<dbReference type="InterPro" id="IPR036928">
    <property type="entry name" value="AS_sf"/>
</dbReference>
<dbReference type="InterPro" id="IPR004412">
    <property type="entry name" value="GatA"/>
</dbReference>
<dbReference type="NCBIfam" id="TIGR00132">
    <property type="entry name" value="gatA"/>
    <property type="match status" value="1"/>
</dbReference>
<dbReference type="PANTHER" id="PTHR11895:SF151">
    <property type="entry name" value="GLUTAMYL-TRNA(GLN) AMIDOTRANSFERASE SUBUNIT A"/>
    <property type="match status" value="1"/>
</dbReference>
<dbReference type="PANTHER" id="PTHR11895">
    <property type="entry name" value="TRANSAMIDASE"/>
    <property type="match status" value="1"/>
</dbReference>
<dbReference type="Pfam" id="PF01425">
    <property type="entry name" value="Amidase"/>
    <property type="match status" value="1"/>
</dbReference>
<dbReference type="SUPFAM" id="SSF75304">
    <property type="entry name" value="Amidase signature (AS) enzymes"/>
    <property type="match status" value="1"/>
</dbReference>
<dbReference type="PROSITE" id="PS00571">
    <property type="entry name" value="AMIDASES"/>
    <property type="match status" value="1"/>
</dbReference>
<proteinExistence type="inferred from homology"/>
<comment type="function">
    <text evidence="1">Allows the formation of correctly charged Gln-tRNA(Gln) through the transamidation of misacylated Glu-tRNA(Gln) in organisms which lack glutaminyl-tRNA synthetase. The reaction takes place in the presence of glutamine and ATP through an activated gamma-phospho-Glu-tRNA(Gln).</text>
</comment>
<comment type="catalytic activity">
    <reaction evidence="1">
        <text>L-glutamyl-tRNA(Gln) + L-glutamine + ATP + H2O = L-glutaminyl-tRNA(Gln) + L-glutamate + ADP + phosphate + H(+)</text>
        <dbReference type="Rhea" id="RHEA:17521"/>
        <dbReference type="Rhea" id="RHEA-COMP:9681"/>
        <dbReference type="Rhea" id="RHEA-COMP:9684"/>
        <dbReference type="ChEBI" id="CHEBI:15377"/>
        <dbReference type="ChEBI" id="CHEBI:15378"/>
        <dbReference type="ChEBI" id="CHEBI:29985"/>
        <dbReference type="ChEBI" id="CHEBI:30616"/>
        <dbReference type="ChEBI" id="CHEBI:43474"/>
        <dbReference type="ChEBI" id="CHEBI:58359"/>
        <dbReference type="ChEBI" id="CHEBI:78520"/>
        <dbReference type="ChEBI" id="CHEBI:78521"/>
        <dbReference type="ChEBI" id="CHEBI:456216"/>
        <dbReference type="EC" id="6.3.5.7"/>
    </reaction>
</comment>
<comment type="subunit">
    <text evidence="1">Heterotrimer of A, B and C subunits.</text>
</comment>
<comment type="similarity">
    <text evidence="1">Belongs to the amidase family. GatA subfamily.</text>
</comment>